<comment type="similarity">
    <text evidence="2">Belongs to the HupH/HyaF family.</text>
</comment>
<dbReference type="EMBL" id="L25315">
    <property type="protein sequence ID" value="AAA64451.1"/>
    <property type="molecule type" value="Genomic_DNA"/>
</dbReference>
<dbReference type="PIR" id="S53660">
    <property type="entry name" value="S53660"/>
</dbReference>
<dbReference type="SMR" id="Q43957"/>
<dbReference type="Gene3D" id="3.30.1370.140">
    <property type="entry name" value="HupH hydrogenase expression protein, C-terminal domain"/>
    <property type="match status" value="2"/>
</dbReference>
<dbReference type="InterPro" id="IPR038527">
    <property type="entry name" value="HupH_C_sf"/>
</dbReference>
<dbReference type="InterPro" id="IPR006894">
    <property type="entry name" value="HupH_Hydgase_express_prot_C"/>
</dbReference>
<dbReference type="Pfam" id="PF04809">
    <property type="entry name" value="HupH_C"/>
    <property type="match status" value="2"/>
</dbReference>
<sequence>MIGTQSILPPGFGPGSHGEEDRLDYLPMPREMHTFERPSLPEPEQLDSHPIALALLERLQEALTAYRIGEQSRVIGLDRQPKADLKLLQQILGEGEVAIQVGGQRPVRIQETVLAGVWWVQLQVGLGEVVGQWLEVADIPALVRRRAFAEARWPRLGATLPDDLLNAGPVLVELLEAAKQHAEHASATPHVINLSLLPFSAEDQRFLAEQLGEGPVTVLSRGYGNCRIASTATPGIWRVQYFNSTDRLILDTLEVTAIPQAACAAQEDIDDSAERLREIREALE</sequence>
<name>HUPQ_AZOCH</name>
<organism>
    <name type="scientific">Azotobacter chroococcum mcd 1</name>
    <dbReference type="NCBI Taxonomy" id="355"/>
    <lineage>
        <taxon>Bacteria</taxon>
        <taxon>Pseudomonadati</taxon>
        <taxon>Pseudomonadota</taxon>
        <taxon>Gammaproteobacteria</taxon>
        <taxon>Pseudomonadales</taxon>
        <taxon>Pseudomonadaceae</taxon>
        <taxon>Azotobacter</taxon>
    </lineage>
</organism>
<feature type="chain" id="PRO_0000201416" description="Hydrogenase expression/formation protein HupQ">
    <location>
        <begin position="1"/>
        <end position="284"/>
    </location>
</feature>
<feature type="region of interest" description="Disordered" evidence="1">
    <location>
        <begin position="1"/>
        <end position="23"/>
    </location>
</feature>
<accession>Q43957</accession>
<protein>
    <recommendedName>
        <fullName>Hydrogenase expression/formation protein HupQ</fullName>
    </recommendedName>
</protein>
<gene>
    <name type="primary">hupQ</name>
</gene>
<reference key="1">
    <citation type="journal article" date="1994" name="J. Mol. Biol.">
        <title>Sequences, organization and analysis of the hupZMNOQRTV genes from the Azotobacter chroococcum hydrogenase gene cluster.</title>
        <authorList>
            <person name="Du L."/>
            <person name="Tibelius K.H."/>
            <person name="Souza E.M."/>
            <person name="Garg R.P."/>
            <person name="Yates M.G."/>
        </authorList>
    </citation>
    <scope>NUCLEOTIDE SEQUENCE [GENOMIC DNA]</scope>
</reference>
<proteinExistence type="inferred from homology"/>
<evidence type="ECO:0000256" key="1">
    <source>
        <dbReference type="SAM" id="MobiDB-lite"/>
    </source>
</evidence>
<evidence type="ECO:0000305" key="2"/>